<evidence type="ECO:0000255" key="1">
    <source>
        <dbReference type="HAMAP-Rule" id="MF_01010"/>
    </source>
</evidence>
<reference key="1">
    <citation type="submission" date="2009-07" db="EMBL/GenBank/DDBJ databases">
        <title>Complete sequence of Pectobacterium carotovorum subsp. carotovorum PC1.</title>
        <authorList>
            <consortium name="US DOE Joint Genome Institute"/>
            <person name="Lucas S."/>
            <person name="Copeland A."/>
            <person name="Lapidus A."/>
            <person name="Glavina del Rio T."/>
            <person name="Tice H."/>
            <person name="Bruce D."/>
            <person name="Goodwin L."/>
            <person name="Pitluck S."/>
            <person name="Munk A.C."/>
            <person name="Brettin T."/>
            <person name="Detter J.C."/>
            <person name="Han C."/>
            <person name="Tapia R."/>
            <person name="Larimer F."/>
            <person name="Land M."/>
            <person name="Hauser L."/>
            <person name="Kyrpides N."/>
            <person name="Mikhailova N."/>
            <person name="Balakrishnan V."/>
            <person name="Glasner J."/>
            <person name="Perna N.T."/>
        </authorList>
    </citation>
    <scope>NUCLEOTIDE SEQUENCE [LARGE SCALE GENOMIC DNA]</scope>
    <source>
        <strain>PC1</strain>
    </source>
</reference>
<sequence length="449" mass="49634">MAQFYSPNRRVTTRKAIPAKNLTVTVTSLDPFGQGVARHEGKTVFVTGVLPGEQAEVQLTEDKRQFSHAKLKRLLTHSPQRVEPQCPHFTRCGGCQQQHADITLQQSSKTAALMRLMTRETGAELPDASLIAGTPYAYRRRARLALYFQAKEQRLLMGYRQSNSHDLVDIKACPVLRPELEALLQPLRDCLSRLKAVKRLGHVELVQAENGPLLVLRHLDPLHPADEQALRDFAEQQGVSVYLAPDADSLTCLHGDEPVYLVAGLTLAFSPRDFIQVNDAVNQQMVAQALAWLDVQPQDRILDLFCGMGNFTLPLAQRAASVVGVEGVTALVEKGRENARRNALSNVTFFHQNLEDDVTQQPWVAQGFDKILLDPARAGAAGVMEQITRLAPKRVVYVSCNATTLARDSKVLLAAGFTLVNVAMLDMFPHTGHLESMALFLHDTGTRKA</sequence>
<gene>
    <name evidence="1" type="primary">rlmD</name>
    <name type="synonym">rumA</name>
    <name type="ordered locus">PC1_3390</name>
</gene>
<feature type="chain" id="PRO_1000213194" description="23S rRNA (uracil(1939)-C(5))-methyltransferase RlmD">
    <location>
        <begin position="1"/>
        <end position="449"/>
    </location>
</feature>
<feature type="domain" description="TRAM" evidence="1">
    <location>
        <begin position="15"/>
        <end position="73"/>
    </location>
</feature>
<feature type="active site" description="Nucleophile" evidence="1">
    <location>
        <position position="400"/>
    </location>
</feature>
<feature type="binding site" evidence="1">
    <location>
        <position position="86"/>
    </location>
    <ligand>
        <name>[4Fe-4S] cluster</name>
        <dbReference type="ChEBI" id="CHEBI:49883"/>
    </ligand>
</feature>
<feature type="binding site" evidence="1">
    <location>
        <position position="92"/>
    </location>
    <ligand>
        <name>[4Fe-4S] cluster</name>
        <dbReference type="ChEBI" id="CHEBI:49883"/>
    </ligand>
</feature>
<feature type="binding site" evidence="1">
    <location>
        <position position="95"/>
    </location>
    <ligand>
        <name>[4Fe-4S] cluster</name>
        <dbReference type="ChEBI" id="CHEBI:49883"/>
    </ligand>
</feature>
<feature type="binding site" evidence="1">
    <location>
        <position position="173"/>
    </location>
    <ligand>
        <name>[4Fe-4S] cluster</name>
        <dbReference type="ChEBI" id="CHEBI:49883"/>
    </ligand>
</feature>
<feature type="binding site" evidence="1">
    <location>
        <position position="276"/>
    </location>
    <ligand>
        <name>S-adenosyl-L-methionine</name>
        <dbReference type="ChEBI" id="CHEBI:59789"/>
    </ligand>
</feature>
<feature type="binding site" evidence="1">
    <location>
        <position position="305"/>
    </location>
    <ligand>
        <name>S-adenosyl-L-methionine</name>
        <dbReference type="ChEBI" id="CHEBI:59789"/>
    </ligand>
</feature>
<feature type="binding site" evidence="1">
    <location>
        <position position="310"/>
    </location>
    <ligand>
        <name>S-adenosyl-L-methionine</name>
        <dbReference type="ChEBI" id="CHEBI:59789"/>
    </ligand>
</feature>
<feature type="binding site" evidence="1">
    <location>
        <position position="326"/>
    </location>
    <ligand>
        <name>S-adenosyl-L-methionine</name>
        <dbReference type="ChEBI" id="CHEBI:59789"/>
    </ligand>
</feature>
<feature type="binding site" evidence="1">
    <location>
        <position position="353"/>
    </location>
    <ligand>
        <name>S-adenosyl-L-methionine</name>
        <dbReference type="ChEBI" id="CHEBI:59789"/>
    </ligand>
</feature>
<feature type="binding site" evidence="1">
    <location>
        <position position="374"/>
    </location>
    <ligand>
        <name>S-adenosyl-L-methionine</name>
        <dbReference type="ChEBI" id="CHEBI:59789"/>
    </ligand>
</feature>
<protein>
    <recommendedName>
        <fullName evidence="1">23S rRNA (uracil(1939)-C(5))-methyltransferase RlmD</fullName>
        <ecNumber evidence="1">2.1.1.190</ecNumber>
    </recommendedName>
    <alternativeName>
        <fullName evidence="1">23S rRNA(m5U1939)-methyltransferase</fullName>
    </alternativeName>
</protein>
<dbReference type="EC" id="2.1.1.190" evidence="1"/>
<dbReference type="EMBL" id="CP001657">
    <property type="protein sequence ID" value="ACT14406.1"/>
    <property type="molecule type" value="Genomic_DNA"/>
</dbReference>
<dbReference type="RefSeq" id="WP_015841536.1">
    <property type="nucleotide sequence ID" value="NC_012917.1"/>
</dbReference>
<dbReference type="SMR" id="C6DDJ9"/>
<dbReference type="STRING" id="561230.PC1_3390"/>
<dbReference type="KEGG" id="pct:PC1_3390"/>
<dbReference type="eggNOG" id="COG2265">
    <property type="taxonomic scope" value="Bacteria"/>
</dbReference>
<dbReference type="HOGENOM" id="CLU_014689_8_2_6"/>
<dbReference type="OrthoDB" id="9804590at2"/>
<dbReference type="Proteomes" id="UP000002736">
    <property type="component" value="Chromosome"/>
</dbReference>
<dbReference type="GO" id="GO:0051539">
    <property type="term" value="F:4 iron, 4 sulfur cluster binding"/>
    <property type="evidence" value="ECO:0007669"/>
    <property type="project" value="UniProtKB-KW"/>
</dbReference>
<dbReference type="GO" id="GO:0005506">
    <property type="term" value="F:iron ion binding"/>
    <property type="evidence" value="ECO:0007669"/>
    <property type="project" value="UniProtKB-UniRule"/>
</dbReference>
<dbReference type="GO" id="GO:0003723">
    <property type="term" value="F:RNA binding"/>
    <property type="evidence" value="ECO:0007669"/>
    <property type="project" value="InterPro"/>
</dbReference>
<dbReference type="GO" id="GO:0070041">
    <property type="term" value="F:rRNA (uridine-C5-)-methyltransferase activity"/>
    <property type="evidence" value="ECO:0007669"/>
    <property type="project" value="UniProtKB-UniRule"/>
</dbReference>
<dbReference type="GO" id="GO:0070475">
    <property type="term" value="P:rRNA base methylation"/>
    <property type="evidence" value="ECO:0007669"/>
    <property type="project" value="TreeGrafter"/>
</dbReference>
<dbReference type="CDD" id="cd02440">
    <property type="entry name" value="AdoMet_MTases"/>
    <property type="match status" value="1"/>
</dbReference>
<dbReference type="FunFam" id="3.40.50.150:FF:000009">
    <property type="entry name" value="23S rRNA (Uracil(1939)-C(5))-methyltransferase RlmD"/>
    <property type="match status" value="1"/>
</dbReference>
<dbReference type="FunFam" id="2.40.50.140:FF:000097">
    <property type="entry name" value="23S rRNA (uracil(1939)-C(5))-methyltransferase RlmD"/>
    <property type="match status" value="1"/>
</dbReference>
<dbReference type="Gene3D" id="2.40.50.1070">
    <property type="match status" value="1"/>
</dbReference>
<dbReference type="Gene3D" id="2.40.50.140">
    <property type="entry name" value="Nucleic acid-binding proteins"/>
    <property type="match status" value="1"/>
</dbReference>
<dbReference type="Gene3D" id="3.40.50.150">
    <property type="entry name" value="Vaccinia Virus protein VP39"/>
    <property type="match status" value="1"/>
</dbReference>
<dbReference type="HAMAP" id="MF_01010">
    <property type="entry name" value="23SrRNA_methyltr_RlmD"/>
    <property type="match status" value="1"/>
</dbReference>
<dbReference type="InterPro" id="IPR001566">
    <property type="entry name" value="23S_rRNA_MeTrfase_RlmD"/>
</dbReference>
<dbReference type="InterPro" id="IPR030390">
    <property type="entry name" value="MeTrfase_TrmA_AS"/>
</dbReference>
<dbReference type="InterPro" id="IPR030391">
    <property type="entry name" value="MeTrfase_TrmA_CS"/>
</dbReference>
<dbReference type="InterPro" id="IPR012340">
    <property type="entry name" value="NA-bd_OB-fold"/>
</dbReference>
<dbReference type="InterPro" id="IPR029063">
    <property type="entry name" value="SAM-dependent_MTases_sf"/>
</dbReference>
<dbReference type="InterPro" id="IPR002792">
    <property type="entry name" value="TRAM_dom"/>
</dbReference>
<dbReference type="InterPro" id="IPR010280">
    <property type="entry name" value="U5_MeTrfase_fam"/>
</dbReference>
<dbReference type="NCBIfam" id="NF009639">
    <property type="entry name" value="PRK13168.1"/>
    <property type="match status" value="1"/>
</dbReference>
<dbReference type="NCBIfam" id="TIGR00479">
    <property type="entry name" value="rumA"/>
    <property type="match status" value="1"/>
</dbReference>
<dbReference type="PANTHER" id="PTHR11061:SF49">
    <property type="entry name" value="23S RRNA (URACIL(1939)-C(5))-METHYLTRANSFERASE RLMD"/>
    <property type="match status" value="1"/>
</dbReference>
<dbReference type="PANTHER" id="PTHR11061">
    <property type="entry name" value="RNA M5U METHYLTRANSFERASE"/>
    <property type="match status" value="1"/>
</dbReference>
<dbReference type="Pfam" id="PF01938">
    <property type="entry name" value="TRAM"/>
    <property type="match status" value="1"/>
</dbReference>
<dbReference type="Pfam" id="PF05958">
    <property type="entry name" value="tRNA_U5-meth_tr"/>
    <property type="match status" value="1"/>
</dbReference>
<dbReference type="SUPFAM" id="SSF50249">
    <property type="entry name" value="Nucleic acid-binding proteins"/>
    <property type="match status" value="1"/>
</dbReference>
<dbReference type="SUPFAM" id="SSF53335">
    <property type="entry name" value="S-adenosyl-L-methionine-dependent methyltransferases"/>
    <property type="match status" value="1"/>
</dbReference>
<dbReference type="PROSITE" id="PS51687">
    <property type="entry name" value="SAM_MT_RNA_M5U"/>
    <property type="match status" value="1"/>
</dbReference>
<dbReference type="PROSITE" id="PS50926">
    <property type="entry name" value="TRAM"/>
    <property type="match status" value="1"/>
</dbReference>
<dbReference type="PROSITE" id="PS01230">
    <property type="entry name" value="TRMA_1"/>
    <property type="match status" value="1"/>
</dbReference>
<dbReference type="PROSITE" id="PS01231">
    <property type="entry name" value="TRMA_2"/>
    <property type="match status" value="1"/>
</dbReference>
<accession>C6DDJ9</accession>
<name>RLMD_PECCP</name>
<organism>
    <name type="scientific">Pectobacterium carotovorum subsp. carotovorum (strain PC1)</name>
    <dbReference type="NCBI Taxonomy" id="561230"/>
    <lineage>
        <taxon>Bacteria</taxon>
        <taxon>Pseudomonadati</taxon>
        <taxon>Pseudomonadota</taxon>
        <taxon>Gammaproteobacteria</taxon>
        <taxon>Enterobacterales</taxon>
        <taxon>Pectobacteriaceae</taxon>
        <taxon>Pectobacterium</taxon>
    </lineage>
</organism>
<proteinExistence type="inferred from homology"/>
<keyword id="KW-0004">4Fe-4S</keyword>
<keyword id="KW-0408">Iron</keyword>
<keyword id="KW-0411">Iron-sulfur</keyword>
<keyword id="KW-0479">Metal-binding</keyword>
<keyword id="KW-0489">Methyltransferase</keyword>
<keyword id="KW-0698">rRNA processing</keyword>
<keyword id="KW-0949">S-adenosyl-L-methionine</keyword>
<keyword id="KW-0808">Transferase</keyword>
<comment type="function">
    <text evidence="1">Catalyzes the formation of 5-methyl-uridine at position 1939 (m5U1939) in 23S rRNA.</text>
</comment>
<comment type="catalytic activity">
    <reaction evidence="1">
        <text>uridine(1939) in 23S rRNA + S-adenosyl-L-methionine = 5-methyluridine(1939) in 23S rRNA + S-adenosyl-L-homocysteine + H(+)</text>
        <dbReference type="Rhea" id="RHEA:42908"/>
        <dbReference type="Rhea" id="RHEA-COMP:10278"/>
        <dbReference type="Rhea" id="RHEA-COMP:10279"/>
        <dbReference type="ChEBI" id="CHEBI:15378"/>
        <dbReference type="ChEBI" id="CHEBI:57856"/>
        <dbReference type="ChEBI" id="CHEBI:59789"/>
        <dbReference type="ChEBI" id="CHEBI:65315"/>
        <dbReference type="ChEBI" id="CHEBI:74447"/>
        <dbReference type="EC" id="2.1.1.190"/>
    </reaction>
</comment>
<comment type="similarity">
    <text evidence="1">Belongs to the class I-like SAM-binding methyltransferase superfamily. RNA M5U methyltransferase family. RlmD subfamily.</text>
</comment>